<accession>Q7NR63</accession>
<comment type="function">
    <text evidence="1">Catalyzes the ATP-dependent phosphorylation of N-acetyl-L-glutamate.</text>
</comment>
<comment type="catalytic activity">
    <reaction evidence="1">
        <text>N-acetyl-L-glutamate + ATP = N-acetyl-L-glutamyl 5-phosphate + ADP</text>
        <dbReference type="Rhea" id="RHEA:14629"/>
        <dbReference type="ChEBI" id="CHEBI:30616"/>
        <dbReference type="ChEBI" id="CHEBI:44337"/>
        <dbReference type="ChEBI" id="CHEBI:57936"/>
        <dbReference type="ChEBI" id="CHEBI:456216"/>
        <dbReference type="EC" id="2.7.2.8"/>
    </reaction>
</comment>
<comment type="pathway">
    <text evidence="1">Amino-acid biosynthesis; L-arginine biosynthesis; N(2)-acetyl-L-ornithine from L-glutamate: step 2/4.</text>
</comment>
<comment type="subcellular location">
    <subcellularLocation>
        <location evidence="1">Cytoplasm</location>
    </subcellularLocation>
</comment>
<comment type="similarity">
    <text evidence="1">Belongs to the acetylglutamate kinase family. ArgB subfamily.</text>
</comment>
<proteinExistence type="inferred from homology"/>
<dbReference type="EC" id="2.7.2.8" evidence="1"/>
<dbReference type="EMBL" id="AE016825">
    <property type="protein sequence ID" value="AAQ61582.1"/>
    <property type="molecule type" value="Genomic_DNA"/>
</dbReference>
<dbReference type="RefSeq" id="WP_011137468.1">
    <property type="nucleotide sequence ID" value="NC_005085.1"/>
</dbReference>
<dbReference type="SMR" id="Q7NR63"/>
<dbReference type="STRING" id="243365.CV_3921"/>
<dbReference type="KEGG" id="cvi:CV_3921"/>
<dbReference type="eggNOG" id="COG0548">
    <property type="taxonomic scope" value="Bacteria"/>
</dbReference>
<dbReference type="HOGENOM" id="CLU_053680_0_0_4"/>
<dbReference type="OrthoDB" id="9803155at2"/>
<dbReference type="UniPathway" id="UPA00068">
    <property type="reaction ID" value="UER00107"/>
</dbReference>
<dbReference type="Proteomes" id="UP000001424">
    <property type="component" value="Chromosome"/>
</dbReference>
<dbReference type="GO" id="GO:0005737">
    <property type="term" value="C:cytoplasm"/>
    <property type="evidence" value="ECO:0007669"/>
    <property type="project" value="UniProtKB-SubCell"/>
</dbReference>
<dbReference type="GO" id="GO:0003991">
    <property type="term" value="F:acetylglutamate kinase activity"/>
    <property type="evidence" value="ECO:0007669"/>
    <property type="project" value="UniProtKB-UniRule"/>
</dbReference>
<dbReference type="GO" id="GO:0005524">
    <property type="term" value="F:ATP binding"/>
    <property type="evidence" value="ECO:0007669"/>
    <property type="project" value="UniProtKB-UniRule"/>
</dbReference>
<dbReference type="GO" id="GO:0042450">
    <property type="term" value="P:arginine biosynthetic process via ornithine"/>
    <property type="evidence" value="ECO:0007669"/>
    <property type="project" value="UniProtKB-UniRule"/>
</dbReference>
<dbReference type="GO" id="GO:0006526">
    <property type="term" value="P:L-arginine biosynthetic process"/>
    <property type="evidence" value="ECO:0007669"/>
    <property type="project" value="UniProtKB-UniPathway"/>
</dbReference>
<dbReference type="CDD" id="cd04250">
    <property type="entry name" value="AAK_NAGK-C"/>
    <property type="match status" value="1"/>
</dbReference>
<dbReference type="FunFam" id="3.40.1160.10:FF:000004">
    <property type="entry name" value="Acetylglutamate kinase"/>
    <property type="match status" value="1"/>
</dbReference>
<dbReference type="Gene3D" id="3.40.1160.10">
    <property type="entry name" value="Acetylglutamate kinase-like"/>
    <property type="match status" value="1"/>
</dbReference>
<dbReference type="HAMAP" id="MF_00082">
    <property type="entry name" value="ArgB"/>
    <property type="match status" value="1"/>
</dbReference>
<dbReference type="InterPro" id="IPR036393">
    <property type="entry name" value="AceGlu_kinase-like_sf"/>
</dbReference>
<dbReference type="InterPro" id="IPR004662">
    <property type="entry name" value="AcgluKinase_fam"/>
</dbReference>
<dbReference type="InterPro" id="IPR037528">
    <property type="entry name" value="ArgB"/>
</dbReference>
<dbReference type="InterPro" id="IPR001048">
    <property type="entry name" value="Asp/Glu/Uridylate_kinase"/>
</dbReference>
<dbReference type="InterPro" id="IPR001057">
    <property type="entry name" value="Glu/AcGlu_kinase"/>
</dbReference>
<dbReference type="InterPro" id="IPR041727">
    <property type="entry name" value="NAGK-C"/>
</dbReference>
<dbReference type="NCBIfam" id="TIGR00761">
    <property type="entry name" value="argB"/>
    <property type="match status" value="1"/>
</dbReference>
<dbReference type="PANTHER" id="PTHR23342">
    <property type="entry name" value="N-ACETYLGLUTAMATE SYNTHASE"/>
    <property type="match status" value="1"/>
</dbReference>
<dbReference type="PANTHER" id="PTHR23342:SF0">
    <property type="entry name" value="N-ACETYLGLUTAMATE SYNTHASE, MITOCHONDRIAL"/>
    <property type="match status" value="1"/>
</dbReference>
<dbReference type="Pfam" id="PF00696">
    <property type="entry name" value="AA_kinase"/>
    <property type="match status" value="1"/>
</dbReference>
<dbReference type="PIRSF" id="PIRSF000728">
    <property type="entry name" value="NAGK"/>
    <property type="match status" value="1"/>
</dbReference>
<dbReference type="PRINTS" id="PR00474">
    <property type="entry name" value="GLU5KINASE"/>
</dbReference>
<dbReference type="SUPFAM" id="SSF53633">
    <property type="entry name" value="Carbamate kinase-like"/>
    <property type="match status" value="1"/>
</dbReference>
<organism>
    <name type="scientific">Chromobacterium violaceum (strain ATCC 12472 / DSM 30191 / JCM 1249 / CCUG 213 / NBRC 12614 / NCIMB 9131 / NCTC 9757 / MK)</name>
    <dbReference type="NCBI Taxonomy" id="243365"/>
    <lineage>
        <taxon>Bacteria</taxon>
        <taxon>Pseudomonadati</taxon>
        <taxon>Pseudomonadota</taxon>
        <taxon>Betaproteobacteria</taxon>
        <taxon>Neisseriales</taxon>
        <taxon>Chromobacteriaceae</taxon>
        <taxon>Chromobacterium</taxon>
    </lineage>
</organism>
<protein>
    <recommendedName>
        <fullName evidence="1">Acetylglutamate kinase</fullName>
        <ecNumber evidence="1">2.7.2.8</ecNumber>
    </recommendedName>
    <alternativeName>
        <fullName evidence="1">N-acetyl-L-glutamate 5-phosphotransferase</fullName>
    </alternativeName>
    <alternativeName>
        <fullName evidence="1">NAG kinase</fullName>
        <shortName evidence="1">NAGK</shortName>
    </alternativeName>
</protein>
<gene>
    <name evidence="1" type="primary">argB</name>
    <name type="ordered locus">CV_3921</name>
</gene>
<evidence type="ECO:0000255" key="1">
    <source>
        <dbReference type="HAMAP-Rule" id="MF_00082"/>
    </source>
</evidence>
<reference key="1">
    <citation type="journal article" date="2003" name="Proc. Natl. Acad. Sci. U.S.A.">
        <title>The complete genome sequence of Chromobacterium violaceum reveals remarkable and exploitable bacterial adaptability.</title>
        <authorList>
            <person name="Vasconcelos A.T.R."/>
            <person name="de Almeida D.F."/>
            <person name="Hungria M."/>
            <person name="Guimaraes C.T."/>
            <person name="Antonio R.V."/>
            <person name="Almeida F.C."/>
            <person name="de Almeida L.G.P."/>
            <person name="de Almeida R."/>
            <person name="Alves-Gomes J.A."/>
            <person name="Andrade E.M."/>
            <person name="Araripe J."/>
            <person name="de Araujo M.F.F."/>
            <person name="Astolfi-Filho S."/>
            <person name="Azevedo V."/>
            <person name="Baptista A.J."/>
            <person name="Bataus L.A.M."/>
            <person name="Batista J.S."/>
            <person name="Belo A."/>
            <person name="van den Berg C."/>
            <person name="Bogo M."/>
            <person name="Bonatto S."/>
            <person name="Bordignon J."/>
            <person name="Brigido M.M."/>
            <person name="Brito C.A."/>
            <person name="Brocchi M."/>
            <person name="Burity H.A."/>
            <person name="Camargo A.A."/>
            <person name="Cardoso D.D.P."/>
            <person name="Carneiro N.P."/>
            <person name="Carraro D.M."/>
            <person name="Carvalho C.M.B."/>
            <person name="Cascardo J.C.M."/>
            <person name="Cavada B.S."/>
            <person name="Chueire L.M.O."/>
            <person name="Creczynski-Pasa T.B."/>
            <person name="Cunha-Junior N.C."/>
            <person name="Fagundes N."/>
            <person name="Falcao C.L."/>
            <person name="Fantinatti F."/>
            <person name="Farias I.P."/>
            <person name="Felipe M.S.S."/>
            <person name="Ferrari L.P."/>
            <person name="Ferro J.A."/>
            <person name="Ferro M.I.T."/>
            <person name="Franco G.R."/>
            <person name="Freitas N.S.A."/>
            <person name="Furlan L.R."/>
            <person name="Gazzinelli R.T."/>
            <person name="Gomes E.A."/>
            <person name="Goncalves P.R."/>
            <person name="Grangeiro T.B."/>
            <person name="Grattapaglia D."/>
            <person name="Grisard E.C."/>
            <person name="Hanna E.S."/>
            <person name="Jardim S.N."/>
            <person name="Laurino J."/>
            <person name="Leoi L.C.T."/>
            <person name="Lima L.F.A."/>
            <person name="Loureiro M.F."/>
            <person name="Lyra M.C.C.P."/>
            <person name="Madeira H.M.F."/>
            <person name="Manfio G.P."/>
            <person name="Maranhao A.Q."/>
            <person name="Martins W.S."/>
            <person name="di Mauro S.M.Z."/>
            <person name="de Medeiros S.R.B."/>
            <person name="Meissner R.V."/>
            <person name="Moreira M.A.M."/>
            <person name="Nascimento F.F."/>
            <person name="Nicolas M.F."/>
            <person name="Oliveira J.G."/>
            <person name="Oliveira S.C."/>
            <person name="Paixao R.F.C."/>
            <person name="Parente J.A."/>
            <person name="Pedrosa F.O."/>
            <person name="Pena S.D.J."/>
            <person name="Pereira J.O."/>
            <person name="Pereira M."/>
            <person name="Pinto L.S.R.C."/>
            <person name="Pinto L.S."/>
            <person name="Porto J.I.R."/>
            <person name="Potrich D.P."/>
            <person name="Ramalho-Neto C.E."/>
            <person name="Reis A.M.M."/>
            <person name="Rigo L.U."/>
            <person name="Rondinelli E."/>
            <person name="Santos E.B.P."/>
            <person name="Santos F.R."/>
            <person name="Schneider M.P.C."/>
            <person name="Seuanez H.N."/>
            <person name="Silva A.M.R."/>
            <person name="da Silva A.L.C."/>
            <person name="Silva D.W."/>
            <person name="Silva R."/>
            <person name="Simoes I.C."/>
            <person name="Simon D."/>
            <person name="Soares C.M.A."/>
            <person name="Soares R.B.A."/>
            <person name="Souza E.M."/>
            <person name="Souza K.R.L."/>
            <person name="Souza R.C."/>
            <person name="Steffens M.B.R."/>
            <person name="Steindel M."/>
            <person name="Teixeira S.R."/>
            <person name="Urmenyi T."/>
            <person name="Vettore A."/>
            <person name="Wassem R."/>
            <person name="Zaha A."/>
            <person name="Simpson A.J.G."/>
        </authorList>
    </citation>
    <scope>NUCLEOTIDE SEQUENCE [LARGE SCALE GENOMIC DNA]</scope>
    <source>
        <strain>ATCC 12472 / DSM 30191 / JCM 1249 / CCUG 213 / NBRC 12614 / NCIMB 9131 / NCTC 9757 / MK</strain>
    </source>
</reference>
<sequence>MATDAAEKANILAEALPYIREFAGKTIVIKYGGNAMTDDALKEGFAKDVVLLKLVGMNPVVVHGGGPQINDLLARVGKQGEFIQGMRVTDAETMEVVEMVLGGLVNKEIVSLINKHGGKAVGLTGKDGHFIRARKLFLKTDGDEDVDIGQVGEIEAIDPALVSLLDSQDFIPVVAPIGVGVDGEAYNINADLVAGKLAETLRAEKLVLMTNTPGVLDKQGQLLTGLTAQRIDELFADGTISGGMLPKISSALDAARNGVNSVHVIDGRVKHALLLEILTAAGVGTMIRA</sequence>
<keyword id="KW-0028">Amino-acid biosynthesis</keyword>
<keyword id="KW-0055">Arginine biosynthesis</keyword>
<keyword id="KW-0067">ATP-binding</keyword>
<keyword id="KW-0963">Cytoplasm</keyword>
<keyword id="KW-0418">Kinase</keyword>
<keyword id="KW-0547">Nucleotide-binding</keyword>
<keyword id="KW-1185">Reference proteome</keyword>
<keyword id="KW-0808">Transferase</keyword>
<name>ARGB_CHRVO</name>
<feature type="chain" id="PRO_0000112606" description="Acetylglutamate kinase">
    <location>
        <begin position="1"/>
        <end position="289"/>
    </location>
</feature>
<feature type="binding site" evidence="1">
    <location>
        <begin position="65"/>
        <end position="66"/>
    </location>
    <ligand>
        <name>substrate</name>
    </ligand>
</feature>
<feature type="binding site" evidence="1">
    <location>
        <position position="87"/>
    </location>
    <ligand>
        <name>substrate</name>
    </ligand>
</feature>
<feature type="binding site" evidence="1">
    <location>
        <position position="187"/>
    </location>
    <ligand>
        <name>substrate</name>
    </ligand>
</feature>
<feature type="site" description="Transition state stabilizer" evidence="1">
    <location>
        <position position="30"/>
    </location>
</feature>
<feature type="site" description="Transition state stabilizer" evidence="1">
    <location>
        <position position="247"/>
    </location>
</feature>